<protein>
    <recommendedName>
        <fullName>Intermediate transcription factor 3 small subunit</fullName>
    </recommendedName>
    <alternativeName>
        <fullName>VITF-3 32 kDa subunit</fullName>
    </alternativeName>
    <alternativeName>
        <fullName>VITF-3 small subunit</fullName>
    </alternativeName>
</protein>
<dbReference type="EMBL" id="U94848">
    <property type="protein sequence ID" value="AAB96520.1"/>
    <property type="molecule type" value="Genomic_DNA"/>
</dbReference>
<dbReference type="EMBL" id="AY603355">
    <property type="protein sequence ID" value="AAT10517.1"/>
    <property type="molecule type" value="Genomic_DNA"/>
</dbReference>
<dbReference type="PIR" id="T37395">
    <property type="entry name" value="T37395"/>
</dbReference>
<dbReference type="RefSeq" id="YP_233009.1">
    <property type="nucleotide sequence ID" value="NC_006998.1"/>
</dbReference>
<dbReference type="SMR" id="P68719"/>
<dbReference type="DNASU" id="3707525"/>
<dbReference type="GeneID" id="3707525"/>
<dbReference type="KEGG" id="vg:3707525"/>
<dbReference type="Proteomes" id="UP000159908">
    <property type="component" value="Segment"/>
</dbReference>
<dbReference type="Proteomes" id="UP000172909">
    <property type="component" value="Segment"/>
</dbReference>
<dbReference type="InterPro" id="IPR006834">
    <property type="entry name" value="Pox_A8"/>
</dbReference>
<dbReference type="Pfam" id="PF04745">
    <property type="entry name" value="Pox_A8"/>
    <property type="match status" value="1"/>
</dbReference>
<keyword id="KW-0010">Activator</keyword>
<keyword id="KW-0244">Early protein</keyword>
<keyword id="KW-0804">Transcription</keyword>
<keyword id="KW-0805">Transcription regulation</keyword>
<organismHost>
    <name type="scientific">Homo sapiens</name>
    <name type="common">Human</name>
    <dbReference type="NCBI Taxonomy" id="9606"/>
</organismHost>
<name>VTF3S_VACCA</name>
<feature type="chain" id="PRO_0000099190" description="Intermediate transcription factor 3 small subunit">
    <location>
        <begin position="1"/>
        <end position="288"/>
    </location>
</feature>
<sequence length="288" mass="33575">MFEPVPDLNLEASVELGEVNIDQTTPMIKENSGFISRSRRLFAHRSKDDERKLALRFFLQRLYFLDHREIHYLFRCVDAVKDVTITKKNNIIVAPYIALLTIASKGCKLTETMIEAFFPELYNEHSKKFKFNSQVSIIQEKLGYQFGNYHVYDFEPYYSTVALAIRDEHSSGIFNIRQESYLVSSLSEITYRFYLINLKSDLVQWSASTGAVINQMVNTVLITVYEKLQLVIENDSQFTCSLAVESKLPIKLLKDRNELFTKFINELKKTSSFKISKRDKDTLLKYFT</sequence>
<comment type="function">
    <text evidence="1">Acts with RNA polymerase to initiate transcription from intermediate gene promoters.</text>
</comment>
<comment type="subunit">
    <text evidence="1">Heterodimer of a 45 kDa (A23R) and a 32 kDa (A8R) subunit to form the virus intermediate transcription factor (VITF)-3.</text>
</comment>
<comment type="induction">
    <text>Expressed in the early phase of the viral replicative cycle.</text>
</comment>
<comment type="similarity">
    <text evidence="2">Belongs to the orthopoxvirus OPG134 family.</text>
</comment>
<accession>P68719</accession>
<accession>O57221</accession>
<accession>Q80HV9</accession>
<proteinExistence type="evidence at transcript level"/>
<organism>
    <name type="scientific">Vaccinia virus (strain Ankara)</name>
    <name type="common">VACV</name>
    <dbReference type="NCBI Taxonomy" id="126794"/>
    <lineage>
        <taxon>Viruses</taxon>
        <taxon>Varidnaviria</taxon>
        <taxon>Bamfordvirae</taxon>
        <taxon>Nucleocytoviricota</taxon>
        <taxon>Pokkesviricetes</taxon>
        <taxon>Chitovirales</taxon>
        <taxon>Poxviridae</taxon>
        <taxon>Chordopoxvirinae</taxon>
        <taxon>Orthopoxvirus</taxon>
        <taxon>Vaccinia virus</taxon>
    </lineage>
</organism>
<gene>
    <name type="primary">OPG134</name>
    <name type="synonym">VITF3S</name>
    <name type="ordered locus">MVA119R</name>
    <name type="ordered locus">ACAM3000_MVA_119</name>
    <name type="ORF">A8R</name>
</gene>
<evidence type="ECO:0000250" key="1">
    <source>
        <dbReference type="UniProtKB" id="P68720"/>
    </source>
</evidence>
<evidence type="ECO:0000305" key="2"/>
<reference key="1">
    <citation type="journal article" date="1998" name="Virology">
        <title>The complete genomic sequence of the modified vaccinia Ankara strain: comparison with other orthopoxviruses.</title>
        <authorList>
            <person name="Antoine G."/>
            <person name="Scheiflinger F."/>
            <person name="Dorner F."/>
            <person name="Falkner F.G."/>
        </authorList>
    </citation>
    <scope>NUCLEOTIDE SEQUENCE [LARGE SCALE GENOMIC DNA]</scope>
</reference>
<reference key="2">
    <citation type="submission" date="2004-04" db="EMBL/GenBank/DDBJ databases">
        <authorList>
            <person name="Esposito J.J."/>
            <person name="Frace M."/>
            <person name="Sammons S.A."/>
            <person name="Olsen-Rasmussen M.S."/>
            <person name="Osborne J."/>
            <person name="Khristova M."/>
            <person name="Wohlhueter R.M."/>
        </authorList>
    </citation>
    <scope>NUCLEOTIDE SEQUENCE [LARGE SCALE GENOMIC DNA]</scope>
    <source>
        <strain>Isolate Acambis 3000</strain>
    </source>
</reference>